<evidence type="ECO:0000255" key="1">
    <source>
        <dbReference type="HAMAP-Rule" id="MF_01366"/>
    </source>
</evidence>
<evidence type="ECO:0000305" key="2"/>
<keyword id="KW-1185">Reference proteome</keyword>
<keyword id="KW-0687">Ribonucleoprotein</keyword>
<keyword id="KW-0689">Ribosomal protein</keyword>
<organism>
    <name type="scientific">Exiguobacterium sibiricum (strain DSM 17290 / CCUG 55495 / CIP 109462 / JCM 13490 / 255-15)</name>
    <dbReference type="NCBI Taxonomy" id="262543"/>
    <lineage>
        <taxon>Bacteria</taxon>
        <taxon>Bacillati</taxon>
        <taxon>Bacillota</taxon>
        <taxon>Bacilli</taxon>
        <taxon>Bacillales</taxon>
        <taxon>Bacillales Family XII. Incertae Sedis</taxon>
        <taxon>Exiguobacterium</taxon>
    </lineage>
</organism>
<dbReference type="EMBL" id="CP001022">
    <property type="protein sequence ID" value="ACB59616.1"/>
    <property type="molecule type" value="Genomic_DNA"/>
</dbReference>
<dbReference type="RefSeq" id="WP_012369041.1">
    <property type="nucleotide sequence ID" value="NC_010556.1"/>
</dbReference>
<dbReference type="SMR" id="B1YH84"/>
<dbReference type="STRING" id="262543.Exig_0129"/>
<dbReference type="KEGG" id="esi:Exig_0129"/>
<dbReference type="eggNOG" id="COG0102">
    <property type="taxonomic scope" value="Bacteria"/>
</dbReference>
<dbReference type="HOGENOM" id="CLU_082184_2_2_9"/>
<dbReference type="OrthoDB" id="9801330at2"/>
<dbReference type="Proteomes" id="UP000001681">
    <property type="component" value="Chromosome"/>
</dbReference>
<dbReference type="GO" id="GO:0022625">
    <property type="term" value="C:cytosolic large ribosomal subunit"/>
    <property type="evidence" value="ECO:0007669"/>
    <property type="project" value="TreeGrafter"/>
</dbReference>
<dbReference type="GO" id="GO:0003729">
    <property type="term" value="F:mRNA binding"/>
    <property type="evidence" value="ECO:0007669"/>
    <property type="project" value="TreeGrafter"/>
</dbReference>
<dbReference type="GO" id="GO:0003735">
    <property type="term" value="F:structural constituent of ribosome"/>
    <property type="evidence" value="ECO:0007669"/>
    <property type="project" value="InterPro"/>
</dbReference>
<dbReference type="GO" id="GO:0017148">
    <property type="term" value="P:negative regulation of translation"/>
    <property type="evidence" value="ECO:0007669"/>
    <property type="project" value="TreeGrafter"/>
</dbReference>
<dbReference type="GO" id="GO:0006412">
    <property type="term" value="P:translation"/>
    <property type="evidence" value="ECO:0007669"/>
    <property type="project" value="UniProtKB-UniRule"/>
</dbReference>
<dbReference type="CDD" id="cd00392">
    <property type="entry name" value="Ribosomal_L13"/>
    <property type="match status" value="1"/>
</dbReference>
<dbReference type="FunFam" id="3.90.1180.10:FF:000001">
    <property type="entry name" value="50S ribosomal protein L13"/>
    <property type="match status" value="1"/>
</dbReference>
<dbReference type="Gene3D" id="3.90.1180.10">
    <property type="entry name" value="Ribosomal protein L13"/>
    <property type="match status" value="1"/>
</dbReference>
<dbReference type="HAMAP" id="MF_01366">
    <property type="entry name" value="Ribosomal_uL13"/>
    <property type="match status" value="1"/>
</dbReference>
<dbReference type="InterPro" id="IPR005822">
    <property type="entry name" value="Ribosomal_uL13"/>
</dbReference>
<dbReference type="InterPro" id="IPR005823">
    <property type="entry name" value="Ribosomal_uL13_bac-type"/>
</dbReference>
<dbReference type="InterPro" id="IPR023563">
    <property type="entry name" value="Ribosomal_uL13_CS"/>
</dbReference>
<dbReference type="InterPro" id="IPR036899">
    <property type="entry name" value="Ribosomal_uL13_sf"/>
</dbReference>
<dbReference type="NCBIfam" id="TIGR01066">
    <property type="entry name" value="rplM_bact"/>
    <property type="match status" value="1"/>
</dbReference>
<dbReference type="PANTHER" id="PTHR11545:SF2">
    <property type="entry name" value="LARGE RIBOSOMAL SUBUNIT PROTEIN UL13M"/>
    <property type="match status" value="1"/>
</dbReference>
<dbReference type="PANTHER" id="PTHR11545">
    <property type="entry name" value="RIBOSOMAL PROTEIN L13"/>
    <property type="match status" value="1"/>
</dbReference>
<dbReference type="Pfam" id="PF00572">
    <property type="entry name" value="Ribosomal_L13"/>
    <property type="match status" value="1"/>
</dbReference>
<dbReference type="PIRSF" id="PIRSF002181">
    <property type="entry name" value="Ribosomal_L13"/>
    <property type="match status" value="1"/>
</dbReference>
<dbReference type="SUPFAM" id="SSF52161">
    <property type="entry name" value="Ribosomal protein L13"/>
    <property type="match status" value="1"/>
</dbReference>
<dbReference type="PROSITE" id="PS00783">
    <property type="entry name" value="RIBOSOMAL_L13"/>
    <property type="match status" value="1"/>
</dbReference>
<accession>B1YH84</accession>
<gene>
    <name evidence="1" type="primary">rplM</name>
    <name type="ordered locus">Exig_0129</name>
</gene>
<reference key="1">
    <citation type="submission" date="2008-04" db="EMBL/GenBank/DDBJ databases">
        <title>Complete sequence of chromosome of Exiguobacterium sibiricum 255-15.</title>
        <authorList>
            <consortium name="US DOE Joint Genome Institute"/>
            <person name="Copeland A."/>
            <person name="Lucas S."/>
            <person name="Lapidus A."/>
            <person name="Glavina del Rio T."/>
            <person name="Dalin E."/>
            <person name="Tice H."/>
            <person name="Bruce D."/>
            <person name="Goodwin L."/>
            <person name="Pitluck S."/>
            <person name="Kiss H."/>
            <person name="Chertkov O."/>
            <person name="Monk C."/>
            <person name="Brettin T."/>
            <person name="Detter J.C."/>
            <person name="Han C."/>
            <person name="Kuske C.R."/>
            <person name="Schmutz J."/>
            <person name="Larimer F."/>
            <person name="Land M."/>
            <person name="Hauser L."/>
            <person name="Kyrpides N."/>
            <person name="Mikhailova N."/>
            <person name="Vishnivetskaya T."/>
            <person name="Rodrigues D.F."/>
            <person name="Gilichinsky D."/>
            <person name="Tiedje J."/>
            <person name="Richardson P."/>
        </authorList>
    </citation>
    <scope>NUCLEOTIDE SEQUENCE [LARGE SCALE GENOMIC DNA]</scope>
    <source>
        <strain>DSM 17290 / CCUG 55495 / CIP 109462 / JCM 13490 / 255-15</strain>
    </source>
</reference>
<name>RL13_EXIS2</name>
<comment type="function">
    <text evidence="1">This protein is one of the early assembly proteins of the 50S ribosomal subunit, although it is not seen to bind rRNA by itself. It is important during the early stages of 50S assembly.</text>
</comment>
<comment type="subunit">
    <text evidence="1">Part of the 50S ribosomal subunit.</text>
</comment>
<comment type="similarity">
    <text evidence="1">Belongs to the universal ribosomal protein uL13 family.</text>
</comment>
<feature type="chain" id="PRO_1000144130" description="Large ribosomal subunit protein uL13">
    <location>
        <begin position="1"/>
        <end position="145"/>
    </location>
</feature>
<protein>
    <recommendedName>
        <fullName evidence="1">Large ribosomal subunit protein uL13</fullName>
    </recommendedName>
    <alternativeName>
        <fullName evidence="2">50S ribosomal protein L13</fullName>
    </alternativeName>
</protein>
<proteinExistence type="inferred from homology"/>
<sequence>MRTTFMAKATDVERKWLLIDAEGKTLGRLSSEVASLLRGKHKPTFTPHVDCGDHVILINVEKIVLTGNKLDKKVYYRHSGHPGGLKQTVARDLLANKPERMLELAIKGMLPKGSLGRQMFNKLHVYAGDTHKQEAQQPEVYELRG</sequence>